<name>STRA6_BOVIN</name>
<sequence>MSTQAAGNQTSSGATDSEDSYDSWYIDEPQGGQELQPEGLVPSCQPNVPPSLYHTCLAVLSILVLFLLAMLVRRRQLWPRCGHGRPGLPSPVDFLTGDRPRTVPAAVFMVLFSSLCLLLPTEDPLPFLSLASPPGRDGEAETSRGPWKILALLYYPALYYPLAACATVRHGAAHLLGSLLSWAHLGVQVWQRAECPESPKIYKYYSLLASLPLLLGLGFLSLWYPVQLVRSFGHGAATGSKGLQSSYSEEYLRTLLCQKKLKSSSHTCKRGFASQAWMYFRHSVYIPQRGFRLPLKLVLSVTLTGTAIYQVALLLLVGVVPTIQKVRAGITTDVSYLLAGFGIVLSEDRQEVVELVKHHLWALEVCYISALVLSCLLTFLMLVHSLVTHRTNLRALHRGGALDIGPLTQSPRPSRQAIFCWMSFTAYQTAFTCLGLLVQQILFFLGTLTLAFLVFMPMLHGRNLLLLHYLKSSWPFWLTLALAVTLQNAAAHWAFLDTHHGRPGLTNRRALYAATFLLFPVNVLVGTMVAAWRVLLSALYNAVHLGRMDLSLLPLRAATLDPGYHTYCNFLRMEASQSHPAATAFCALLLRTQRPKPRATPQDGLRLGEEEEGIQLLQTKDLVAKGAGPRARQGRARWGLAYTLLHNPALQAFRKTALPGARPNGAQP</sequence>
<evidence type="ECO:0000250" key="1">
    <source>
        <dbReference type="UniProtKB" id="F1RAX4"/>
    </source>
</evidence>
<evidence type="ECO:0000250" key="2">
    <source>
        <dbReference type="UniProtKB" id="Q9BX79"/>
    </source>
</evidence>
<evidence type="ECO:0000255" key="3"/>
<evidence type="ECO:0000256" key="4">
    <source>
        <dbReference type="SAM" id="MobiDB-lite"/>
    </source>
</evidence>
<evidence type="ECO:0000269" key="5">
    <source>
    </source>
</evidence>
<evidence type="ECO:0000269" key="6">
    <source>
    </source>
</evidence>
<evidence type="ECO:0000305" key="7"/>
<protein>
    <recommendedName>
        <fullName>Receptor for retinol uptake STRA6</fullName>
    </recommendedName>
    <alternativeName>
        <fullName>Retinol-binding protein receptor STRA6</fullName>
    </alternativeName>
    <alternativeName>
        <fullName>Stimulated by retinoic acid gene 6 protein homolog</fullName>
    </alternativeName>
</protein>
<reference key="1">
    <citation type="journal article" date="2005" name="BMC Genomics">
        <title>Characterization of 954 bovine full-CDS cDNA sequences.</title>
        <authorList>
            <person name="Harhay G.P."/>
            <person name="Sonstegard T.S."/>
            <person name="Keele J.W."/>
            <person name="Heaton M.P."/>
            <person name="Clawson M.L."/>
            <person name="Snelling W.M."/>
            <person name="Wiedmann R.T."/>
            <person name="Van Tassell C.P."/>
            <person name="Smith T.P.L."/>
        </authorList>
    </citation>
    <scope>NUCLEOTIDE SEQUENCE [LARGE SCALE MRNA]</scope>
</reference>
<reference key="2">
    <citation type="submission" date="2007-06" db="EMBL/GenBank/DDBJ databases">
        <authorList>
            <consortium name="NIH - Mammalian Gene Collection (MGC) project"/>
        </authorList>
    </citation>
    <scope>NUCLEOTIDE SEQUENCE [LARGE SCALE MRNA]</scope>
    <source>
        <strain>Hereford</strain>
        <tissue>Fetal pons</tissue>
    </source>
</reference>
<reference key="3">
    <citation type="journal article" date="2007" name="Science">
        <title>A membrane receptor for retinol binding protein mediates cellular uptake of vitamin A.</title>
        <authorList>
            <person name="Kawaguchi R."/>
            <person name="Yu J."/>
            <person name="Honda J."/>
            <person name="Hu J."/>
            <person name="Whitelegge J."/>
            <person name="Ping P."/>
            <person name="Wiita P."/>
            <person name="Bok D."/>
            <person name="Sun H."/>
        </authorList>
    </citation>
    <scope>FUNCTION</scope>
    <scope>INTERACTION WITH RBP4</scope>
    <scope>SUBCELLULAR LOCATION</scope>
    <scope>TISSUE SPECIFICITY</scope>
    <scope>MUTAGENESIS OF LEU-256; LEU-297; GLN-310; LEU-315 AND TYR-336</scope>
</reference>
<reference key="4">
    <citation type="journal article" date="2008" name="Biochemistry">
        <title>Mapping the membrane topology and extracellular ligand binding domains of the retinol binding protein receptor.</title>
        <authorList>
            <person name="Kawaguchi R."/>
            <person name="Yu J."/>
            <person name="Wiita P."/>
            <person name="Ter-Stepanian M."/>
            <person name="Sun H."/>
        </authorList>
    </citation>
    <scope>FUNCTION</scope>
    <scope>INTERACTION WITH RBP4</scope>
    <scope>SUBCELLULAR LOCATION</scope>
    <scope>TOPOLOGY</scope>
</reference>
<organism>
    <name type="scientific">Bos taurus</name>
    <name type="common">Bovine</name>
    <dbReference type="NCBI Taxonomy" id="9913"/>
    <lineage>
        <taxon>Eukaryota</taxon>
        <taxon>Metazoa</taxon>
        <taxon>Chordata</taxon>
        <taxon>Craniata</taxon>
        <taxon>Vertebrata</taxon>
        <taxon>Euteleostomi</taxon>
        <taxon>Mammalia</taxon>
        <taxon>Eutheria</taxon>
        <taxon>Laurasiatheria</taxon>
        <taxon>Artiodactyla</taxon>
        <taxon>Ruminantia</taxon>
        <taxon>Pecora</taxon>
        <taxon>Bovidae</taxon>
        <taxon>Bovinae</taxon>
        <taxon>Bos</taxon>
    </lineage>
</organism>
<dbReference type="EMBL" id="BT026272">
    <property type="protein sequence ID" value="ABG81428.1"/>
    <property type="molecule type" value="mRNA"/>
</dbReference>
<dbReference type="EMBL" id="BC142342">
    <property type="protein sequence ID" value="AAI42343.1"/>
    <property type="molecule type" value="mRNA"/>
</dbReference>
<dbReference type="RefSeq" id="NP_001069198.1">
    <property type="nucleotide sequence ID" value="NM_001075730.1"/>
</dbReference>
<dbReference type="SMR" id="Q0V8E7"/>
<dbReference type="FunCoup" id="Q0V8E7">
    <property type="interactions" value="121"/>
</dbReference>
<dbReference type="STRING" id="9913.ENSBTAP00000070804"/>
<dbReference type="TCDB" id="2.A.90.1.1">
    <property type="family name" value="the vitamin a receptor/transporter (stra6) family"/>
</dbReference>
<dbReference type="GlyCosmos" id="Q0V8E7">
    <property type="glycosylation" value="1 site, No reported glycans"/>
</dbReference>
<dbReference type="GlyGen" id="Q0V8E7">
    <property type="glycosylation" value="1 site"/>
</dbReference>
<dbReference type="SwissPalm" id="Q0V8E7"/>
<dbReference type="PaxDb" id="9913-ENSBTAP00000038534"/>
<dbReference type="GeneID" id="515911"/>
<dbReference type="KEGG" id="bta:515911"/>
<dbReference type="CTD" id="64220"/>
<dbReference type="eggNOG" id="ENOG502QRSS">
    <property type="taxonomic scope" value="Eukaryota"/>
</dbReference>
<dbReference type="InParanoid" id="Q0V8E7"/>
<dbReference type="OrthoDB" id="9939815at2759"/>
<dbReference type="Proteomes" id="UP000009136">
    <property type="component" value="Unplaced"/>
</dbReference>
<dbReference type="GO" id="GO:0005886">
    <property type="term" value="C:plasma membrane"/>
    <property type="evidence" value="ECO:0000250"/>
    <property type="project" value="UniProtKB"/>
</dbReference>
<dbReference type="GO" id="GO:0016918">
    <property type="term" value="F:retinal binding"/>
    <property type="evidence" value="ECO:0007669"/>
    <property type="project" value="UniProtKB-KW"/>
</dbReference>
<dbReference type="GO" id="GO:0019841">
    <property type="term" value="F:retinol binding"/>
    <property type="evidence" value="ECO:0007669"/>
    <property type="project" value="UniProtKB-KW"/>
</dbReference>
<dbReference type="GO" id="GO:0034632">
    <property type="term" value="F:retinol transmembrane transporter activity"/>
    <property type="evidence" value="ECO:0000250"/>
    <property type="project" value="UniProtKB"/>
</dbReference>
<dbReference type="GO" id="GO:0038023">
    <property type="term" value="F:signaling receptor activity"/>
    <property type="evidence" value="ECO:0007669"/>
    <property type="project" value="InterPro"/>
</dbReference>
<dbReference type="GO" id="GO:0043010">
    <property type="term" value="P:camera-type eye development"/>
    <property type="evidence" value="ECO:0000250"/>
    <property type="project" value="UniProtKB"/>
</dbReference>
<dbReference type="GO" id="GO:0034633">
    <property type="term" value="P:retinol transport"/>
    <property type="evidence" value="ECO:0000250"/>
    <property type="project" value="UniProtKB"/>
</dbReference>
<dbReference type="GO" id="GO:0071939">
    <property type="term" value="P:vitamin A import into cell"/>
    <property type="evidence" value="ECO:0000318"/>
    <property type="project" value="GO_Central"/>
</dbReference>
<dbReference type="InterPro" id="IPR026612">
    <property type="entry name" value="STRA6-like"/>
</dbReference>
<dbReference type="PANTHER" id="PTHR21444">
    <property type="entry name" value="COILED-COIL DOMAIN-CONTAINING PROTEIN 180"/>
    <property type="match status" value="1"/>
</dbReference>
<dbReference type="PANTHER" id="PTHR21444:SF16">
    <property type="entry name" value="RECEPTOR FOR RETINOL UPTAKE STRA6"/>
    <property type="match status" value="1"/>
</dbReference>
<dbReference type="Pfam" id="PF14752">
    <property type="entry name" value="RBP_receptor"/>
    <property type="match status" value="1"/>
</dbReference>
<feature type="chain" id="PRO_0000311227" description="Receptor for retinol uptake STRA6">
    <location>
        <begin position="1"/>
        <end position="668"/>
    </location>
</feature>
<feature type="topological domain" description="Extracellular" evidence="6">
    <location>
        <begin position="1"/>
        <end position="51"/>
    </location>
</feature>
<feature type="transmembrane region" description="Helical" evidence="1">
    <location>
        <begin position="52"/>
        <end position="72"/>
    </location>
</feature>
<feature type="topological domain" description="Cytoplasmic" evidence="1">
    <location>
        <begin position="73"/>
        <end position="101"/>
    </location>
</feature>
<feature type="transmembrane region" description="Helical" evidence="1">
    <location>
        <begin position="102"/>
        <end position="122"/>
    </location>
</feature>
<feature type="topological domain" description="Extracellular" evidence="1">
    <location>
        <begin position="123"/>
        <end position="145"/>
    </location>
</feature>
<feature type="transmembrane region" description="Helical" evidence="1">
    <location>
        <begin position="146"/>
        <end position="166"/>
    </location>
</feature>
<feature type="topological domain" description="Cytoplasmic" evidence="1">
    <location>
        <begin position="167"/>
        <end position="169"/>
    </location>
</feature>
<feature type="transmembrane region" description="Helical" evidence="1">
    <location>
        <begin position="170"/>
        <end position="190"/>
    </location>
</feature>
<feature type="topological domain" description="Extracellular" evidence="1">
    <location>
        <begin position="191"/>
        <end position="206"/>
    </location>
</feature>
<feature type="transmembrane region" description="Helical" evidence="1">
    <location>
        <begin position="207"/>
        <end position="227"/>
    </location>
</feature>
<feature type="topological domain" description="Cytoplasmic" evidence="1">
    <location>
        <begin position="228"/>
        <end position="296"/>
    </location>
</feature>
<feature type="transmembrane region" description="Helical" evidence="1">
    <location>
        <begin position="297"/>
        <end position="317"/>
    </location>
</feature>
<feature type="topological domain" description="Extracellular" evidence="1">
    <location>
        <begin position="318"/>
        <end position="368"/>
    </location>
</feature>
<feature type="transmembrane region" description="Helical" evidence="1">
    <location>
        <begin position="369"/>
        <end position="389"/>
    </location>
</feature>
<feature type="topological domain" description="Cytoplasmic" evidence="1">
    <location>
        <begin position="390"/>
        <end position="423"/>
    </location>
</feature>
<feature type="transmembrane region" description="Helical" evidence="1">
    <location>
        <begin position="424"/>
        <end position="444"/>
    </location>
</feature>
<feature type="topological domain" description="Extracellular" evidence="1">
    <location>
        <begin position="445"/>
        <end position="474"/>
    </location>
</feature>
<feature type="transmembrane region" description="Helical" evidence="1">
    <location>
        <begin position="475"/>
        <end position="495"/>
    </location>
</feature>
<feature type="topological domain" description="Cytoplasmic" evidence="1">
    <location>
        <begin position="496"/>
        <end position="510"/>
    </location>
</feature>
<feature type="intramembrane region" description="Helical" evidence="1">
    <location>
        <begin position="511"/>
        <end position="548"/>
    </location>
</feature>
<feature type="topological domain" description="Cytoplasmic" evidence="6">
    <location>
        <begin position="549"/>
        <end position="668"/>
    </location>
</feature>
<feature type="region of interest" description="Disordered" evidence="4">
    <location>
        <begin position="1"/>
        <end position="28"/>
    </location>
</feature>
<feature type="region of interest" description="Interaction with RBP1" evidence="2">
    <location>
        <begin position="236"/>
        <end position="294"/>
    </location>
</feature>
<feature type="compositionally biased region" description="Polar residues" evidence="4">
    <location>
        <begin position="1"/>
        <end position="15"/>
    </location>
</feature>
<feature type="modified residue" description="Phosphotyrosine" evidence="2">
    <location>
        <position position="642"/>
    </location>
</feature>
<feature type="glycosylation site" description="N-linked (GlcNAc...) asparagine" evidence="3">
    <location>
        <position position="8"/>
    </location>
</feature>
<feature type="mutagenesis site" description="Not expressed at the cell surface; when associated with H-336." evidence="5">
    <original>L</original>
    <variation>H</variation>
    <location>
        <position position="256"/>
    </location>
</feature>
<feature type="mutagenesis site" description="Not expressed at the cell surface." evidence="5">
    <original>L</original>
    <variation>R</variation>
    <location>
        <position position="297"/>
    </location>
</feature>
<feature type="mutagenesis site" description="Expressed at the cell surface but reduced RBP binding and vitamin A uptake activity; when associated with P-315." evidence="5">
    <original>Q</original>
    <variation>H</variation>
    <location>
        <position position="310"/>
    </location>
</feature>
<feature type="mutagenesis site" description="Expressed at the cell surface but reduced RBP binding and vitamin A uptake activity; when associated with H-310." evidence="5">
    <original>L</original>
    <variation>P</variation>
    <location>
        <position position="315"/>
    </location>
</feature>
<feature type="mutagenesis site" description="Not expressed at the cell surface; when associated with H-256." evidence="5">
    <original>Y</original>
    <variation>H</variation>
    <location>
        <position position="336"/>
    </location>
</feature>
<feature type="sequence conflict" description="In Ref. 2; AAI42343." evidence="7" ref="2">
    <original>N</original>
    <variation>S</variation>
    <location>
        <position position="47"/>
    </location>
</feature>
<feature type="sequence conflict" description="In Ref. 2; AAI42343." evidence="7" ref="2">
    <original>A</original>
    <variation>V</variation>
    <location>
        <position position="157"/>
    </location>
</feature>
<feature type="sequence conflict" description="In Ref. 2; AAI42343." evidence="7" ref="2">
    <original>R</original>
    <variation>Q</variation>
    <location>
        <position position="289"/>
    </location>
</feature>
<accession>Q0V8E7</accession>
<accession>A5PK38</accession>
<gene>
    <name type="primary">STRA6</name>
</gene>
<proteinExistence type="evidence at protein level"/>
<keyword id="KW-1003">Cell membrane</keyword>
<keyword id="KW-0325">Glycoprotein</keyword>
<keyword id="KW-0472">Membrane</keyword>
<keyword id="KW-0597">Phosphoprotein</keyword>
<keyword id="KW-0675">Receptor</keyword>
<keyword id="KW-1185">Reference proteome</keyword>
<keyword id="KW-0683">Retinol-binding</keyword>
<keyword id="KW-0812">Transmembrane</keyword>
<keyword id="KW-1133">Transmembrane helix</keyword>
<keyword id="KW-0813">Transport</keyword>
<keyword id="KW-0845">Vitamin A</keyword>
<comment type="function">
    <text evidence="2 5 6">Functions as a retinol transporter. Accepts all-trans retinol from the extracellular retinol-binding protein RBP4, facilitates retinol transport across the cell membrane, and then transfers retinol to the cytoplasmic retinol-binding protein RBP1 (PubMed:17255476, PubMed:18419130). Retinol uptake is enhanced by LRAT, an enzyme that converts retinol to all-trans retinyl esters, the storage forms of vitamin A. Contributes to the activation of a signaling cascade that depends on retinol transport and LRAT-dependent generation of retinol metabolites that then trigger activation of JAK2 and its target STAT5, and ultimately increase the expression of SOCS3 and inhibit cellular responses to insulin. Important for the homeostasis of vitamin A and its derivatives, such as retinoic acid. STRA6-mediated transport is particularly important in the eye, and under conditions of dietary vitamin A deficiency. Does not transport retinoic acid (By similarity).</text>
</comment>
<comment type="subunit">
    <text evidence="1 2 5 6">Homodimer (By similarity). Interacts with JAK2 and STAT5. Interacts (via extracellular domains) with RBP4 (PubMed:17255476, PubMed:18419130). Interacts (via cytoplasmic domains) with RBP1 (By similarity).</text>
</comment>
<comment type="subcellular location">
    <subcellularLocation>
        <location evidence="5 6">Cell membrane</location>
        <topology evidence="5 6">Multi-pass membrane protein</topology>
    </subcellularLocation>
    <text evidence="5">In the retinal pigment epithelium localizes to the basolateral membrane.</text>
</comment>
<comment type="tissue specificity">
    <text evidence="5">Expressed in placenta, spleen, retinal blood vessels, and in astrocyte perivascular endfeet. Not detected in the endothelial cells of the choriocapillaris (at protein level).</text>
</comment>
<comment type="domain">
    <text evidence="1 6">Contrary to predictions, contains nine transmembrane helices, with an extracellular N-terminus and a cytoplasmic C-terminus (PubMed:18419130). Besides, contains one long helix that dips into the membrane and then runs more or less parallel to the membrane surface (By similarity).</text>
</comment>
<comment type="PTM">
    <text evidence="2">Phosphorylated on tyrosine residues in response to RBP4 binding. Phosphorylation requires the presence of LRAT, suggesting it may be triggered by the uptake of retinol that is then metabolized within the cell to retinoids that function as signaling molecules.</text>
</comment>